<organism>
    <name type="scientific">Arabidopsis thaliana</name>
    <name type="common">Mouse-ear cress</name>
    <dbReference type="NCBI Taxonomy" id="3702"/>
    <lineage>
        <taxon>Eukaryota</taxon>
        <taxon>Viridiplantae</taxon>
        <taxon>Streptophyta</taxon>
        <taxon>Embryophyta</taxon>
        <taxon>Tracheophyta</taxon>
        <taxon>Spermatophyta</taxon>
        <taxon>Magnoliopsida</taxon>
        <taxon>eudicotyledons</taxon>
        <taxon>Gunneridae</taxon>
        <taxon>Pentapetalae</taxon>
        <taxon>rosids</taxon>
        <taxon>malvids</taxon>
        <taxon>Brassicales</taxon>
        <taxon>Brassicaceae</taxon>
        <taxon>Camelineae</taxon>
        <taxon>Arabidopsis</taxon>
    </lineage>
</organism>
<evidence type="ECO:0000250" key="1">
    <source>
        <dbReference type="UniProtKB" id="Q72JJ7"/>
    </source>
</evidence>
<evidence type="ECO:0000255" key="2"/>
<evidence type="ECO:0000255" key="3">
    <source>
        <dbReference type="PROSITE-ProRule" id="PRU00133"/>
    </source>
</evidence>
<evidence type="ECO:0000256" key="4">
    <source>
        <dbReference type="SAM" id="MobiDB-lite"/>
    </source>
</evidence>
<evidence type="ECO:0000269" key="5">
    <source>
    </source>
</evidence>
<evidence type="ECO:0000269" key="6">
    <source>
    </source>
</evidence>
<evidence type="ECO:0000269" key="7">
    <source>
    </source>
</evidence>
<evidence type="ECO:0000303" key="8">
    <source>
    </source>
</evidence>
<evidence type="ECO:0000303" key="9">
    <source>
    </source>
</evidence>
<evidence type="ECO:0000305" key="10"/>
<evidence type="ECO:0000312" key="11">
    <source>
        <dbReference type="Araport" id="AT5G63420"/>
    </source>
</evidence>
<evidence type="ECO:0000312" key="12">
    <source>
        <dbReference type="EMBL" id="BAB08807.1"/>
    </source>
</evidence>
<evidence type="ECO:0000312" key="13">
    <source>
        <dbReference type="EMBL" id="BAB08808.1"/>
    </source>
</evidence>
<gene>
    <name evidence="9" type="primary">RNJ</name>
    <name evidence="8" type="synonym">EMB2746</name>
    <name evidence="11" type="ordered locus">At5g63420</name>
    <name evidence="12" type="ORF">MLE2.5</name>
    <name evidence="13" type="ORF">MLE2.6</name>
</gene>
<comment type="function">
    <text evidence="1 5 6 7">Essential protein required during embryogenesis, especially in initiating and maintaining the organization of shoot apical meristems (SAMs), cotyledons, and hypocotyls (PubMed:15266054, PubMed:25871650). Involved in auxin-mediated pathways during embryogenesis (PubMed:25871650). RNase that has both endonuclease and 5'-3' exonuclease activities. Involved in RNA surveillance to prevent overaccumulation of antisense RNA (PubMed:22033332). Probably involved in maturation of rRNA and in some organisms also mRNA maturation and/or decay (By similarity).</text>
</comment>
<comment type="cofactor">
    <cofactor evidence="1">
        <name>Zn(2+)</name>
        <dbReference type="ChEBI" id="CHEBI:29105"/>
    </cofactor>
    <text evidence="1">Binds up to 2 Zn(2+) ions per subunit.</text>
</comment>
<comment type="subunit">
    <text evidence="1">Homodimer. May be a subunit of the RNA degradosome.</text>
</comment>
<comment type="subcellular location">
    <subcellularLocation>
        <location evidence="6">Plastid</location>
        <location evidence="6">Chloroplast</location>
    </subcellularLocation>
</comment>
<comment type="tissue specificity">
    <text evidence="7">Moslty expressed in inflorescences, seedlings, leaves, flowers and flower buds, and, to a lower extent, in stems, siliques and roots.</text>
</comment>
<comment type="developmental stage">
    <text evidence="7">During the early stages of embryo development, first observed at the transition stage. In the heart and torpedo stages, predominantly present in the upper part of embryos. In seedlings, strongly expressed in shoot meristems, hypocotyls, in the vascular bundles of cotyledons, and in the veins of mature leaves. In reproductive organs, detected in inflorescences, especially in sepals, filaments, and stigmas, as well as in mature siliques and seeds.</text>
</comment>
<comment type="induction">
    <text evidence="7">By light.</text>
</comment>
<comment type="disruption phenotype">
    <text evidence="5 6 7">Defective embryo arrested at globular stage (PubMed:15266054, PubMed:25871650). Impaired chloroplast development due to a disturbed formation of internal thylakoid membranes during embryogenesis. Aberrant embryo patterning along the apical-basal axis. Disrupted transport and response of auxin in embryos (PubMed:25871650). Silenced plants exhibit chlorosis and slight disruptions in the cleavage of polycistronic rRNA and mRNA precursors (PubMed:22033332).</text>
</comment>
<comment type="similarity">
    <text evidence="10">Belongs to the metallo-beta-lactamase superfamily. RNA-metabolizing metallo-beta-lactamase-like family. Bacterial RNase J subfamily.</text>
</comment>
<comment type="sequence caution" evidence="10">
    <conflict type="erroneous gene model prediction">
        <sequence resource="EMBL-CDS" id="BAB08807"/>
    </conflict>
</comment>
<comment type="sequence caution" evidence="10">
    <conflict type="erroneous gene model prediction">
        <sequence resource="EMBL-CDS" id="BAB08808"/>
    </conflict>
</comment>
<comment type="online information" name="Seed defective Arabidopsis mutants">
    <link uri="http://seedgenes.org/MutantList"/>
</comment>
<reference key="1">
    <citation type="journal article" date="1997" name="DNA Res.">
        <title>Structural analysis of Arabidopsis thaliana chromosome 5. III. Sequence features of the regions of 1,191,918 bp covered by seventeen physically assigned P1 clones.</title>
        <authorList>
            <person name="Nakamura Y."/>
            <person name="Sato S."/>
            <person name="Kaneko T."/>
            <person name="Kotani H."/>
            <person name="Asamizu E."/>
            <person name="Miyajima N."/>
            <person name="Tabata S."/>
        </authorList>
    </citation>
    <scope>NUCLEOTIDE SEQUENCE [LARGE SCALE GENOMIC DNA]</scope>
    <source>
        <strain>cv. Columbia</strain>
    </source>
</reference>
<reference key="2">
    <citation type="journal article" date="2017" name="Plant J.">
        <title>Araport11: a complete reannotation of the Arabidopsis thaliana reference genome.</title>
        <authorList>
            <person name="Cheng C.Y."/>
            <person name="Krishnakumar V."/>
            <person name="Chan A.P."/>
            <person name="Thibaud-Nissen F."/>
            <person name="Schobel S."/>
            <person name="Town C.D."/>
        </authorList>
    </citation>
    <scope>GENOME REANNOTATION</scope>
    <source>
        <strain>cv. Columbia</strain>
    </source>
</reference>
<reference key="3">
    <citation type="journal article" date="2003" name="Science">
        <title>Empirical analysis of transcriptional activity in the Arabidopsis genome.</title>
        <authorList>
            <person name="Yamada K."/>
            <person name="Lim J."/>
            <person name="Dale J.M."/>
            <person name="Chen H."/>
            <person name="Shinn P."/>
            <person name="Palm C.J."/>
            <person name="Southwick A.M."/>
            <person name="Wu H.C."/>
            <person name="Kim C.J."/>
            <person name="Nguyen M."/>
            <person name="Pham P.K."/>
            <person name="Cheuk R.F."/>
            <person name="Karlin-Newmann G."/>
            <person name="Liu S.X."/>
            <person name="Lam B."/>
            <person name="Sakano H."/>
            <person name="Wu T."/>
            <person name="Yu G."/>
            <person name="Miranda M."/>
            <person name="Quach H.L."/>
            <person name="Tripp M."/>
            <person name="Chang C.H."/>
            <person name="Lee J.M."/>
            <person name="Toriumi M.J."/>
            <person name="Chan M.M."/>
            <person name="Tang C.C."/>
            <person name="Onodera C.S."/>
            <person name="Deng J.M."/>
            <person name="Akiyama K."/>
            <person name="Ansari Y."/>
            <person name="Arakawa T."/>
            <person name="Banh J."/>
            <person name="Banno F."/>
            <person name="Bowser L."/>
            <person name="Brooks S.Y."/>
            <person name="Carninci P."/>
            <person name="Chao Q."/>
            <person name="Choy N."/>
            <person name="Enju A."/>
            <person name="Goldsmith A.D."/>
            <person name="Gurjal M."/>
            <person name="Hansen N.F."/>
            <person name="Hayashizaki Y."/>
            <person name="Johnson-Hopson C."/>
            <person name="Hsuan V.W."/>
            <person name="Iida K."/>
            <person name="Karnes M."/>
            <person name="Khan S."/>
            <person name="Koesema E."/>
            <person name="Ishida J."/>
            <person name="Jiang P.X."/>
            <person name="Jones T."/>
            <person name="Kawai J."/>
            <person name="Kamiya A."/>
            <person name="Meyers C."/>
            <person name="Nakajima M."/>
            <person name="Narusaka M."/>
            <person name="Seki M."/>
            <person name="Sakurai T."/>
            <person name="Satou M."/>
            <person name="Tamse R."/>
            <person name="Vaysberg M."/>
            <person name="Wallender E.K."/>
            <person name="Wong C."/>
            <person name="Yamamura Y."/>
            <person name="Yuan S."/>
            <person name="Shinozaki K."/>
            <person name="Davis R.W."/>
            <person name="Theologis A."/>
            <person name="Ecker J.R."/>
        </authorList>
    </citation>
    <scope>NUCLEOTIDE SEQUENCE [LARGE SCALE MRNA]</scope>
    <source>
        <strain>cv. Columbia</strain>
    </source>
</reference>
<reference key="4">
    <citation type="submission" date="2005-03" db="EMBL/GenBank/DDBJ databases">
        <title>Large-scale analysis of RIKEN Arabidopsis full-length (RAFL) cDNAs.</title>
        <authorList>
            <person name="Totoki Y."/>
            <person name="Seki M."/>
            <person name="Ishida J."/>
            <person name="Nakajima M."/>
            <person name="Enju A."/>
            <person name="Kamiya A."/>
            <person name="Narusaka M."/>
            <person name="Shin-i T."/>
            <person name="Nakagawa M."/>
            <person name="Sakamoto N."/>
            <person name="Oishi K."/>
            <person name="Kohara Y."/>
            <person name="Kobayashi M."/>
            <person name="Toyoda A."/>
            <person name="Sakaki Y."/>
            <person name="Sakurai T."/>
            <person name="Iida K."/>
            <person name="Akiyama K."/>
            <person name="Satou M."/>
            <person name="Toyoda T."/>
            <person name="Konagaya A."/>
            <person name="Carninci P."/>
            <person name="Kawai J."/>
            <person name="Hayashizaki Y."/>
            <person name="Shinozaki K."/>
        </authorList>
    </citation>
    <scope>NUCLEOTIDE SEQUENCE [LARGE SCALE MRNA]</scope>
    <source>
        <strain>cv. Columbia</strain>
    </source>
</reference>
<reference key="5">
    <citation type="journal article" date="2004" name="Plant Physiol.">
        <title>Identification of genes required for embryo development in Arabidopsis.</title>
        <authorList>
            <person name="Tzafrir I."/>
            <person name="Pena-Muralla R."/>
            <person name="Dickerman A."/>
            <person name="Berg M."/>
            <person name="Rogers R."/>
            <person name="Hutchens S."/>
            <person name="Sweeney T.C."/>
            <person name="McElver J."/>
            <person name="Aux G."/>
            <person name="Patton D."/>
            <person name="Meinke D."/>
        </authorList>
    </citation>
    <scope>FUNCTION [LARGE SCALE ANALYSIS]</scope>
    <scope>DISRUPTION PHENOTYPE [LARGE SCALE ANALYSIS]</scope>
    <source>
        <strain>cv. Columbia</strain>
    </source>
</reference>
<reference key="6">
    <citation type="journal article" date="2009" name="J. Proteomics">
        <title>Phosphoproteomic analysis of nuclei-enriched fractions from Arabidopsis thaliana.</title>
        <authorList>
            <person name="Jones A.M.E."/>
            <person name="MacLean D."/>
            <person name="Studholme D.J."/>
            <person name="Serna-Sanz A."/>
            <person name="Andreasson E."/>
            <person name="Rathjen J.P."/>
            <person name="Peck S.C."/>
        </authorList>
    </citation>
    <scope>IDENTIFICATION BY MASS SPECTROMETRY [LARGE SCALE ANALYSIS]</scope>
</reference>
<reference key="7">
    <citation type="journal article" date="2009" name="Plant Physiol.">
        <title>Large-scale Arabidopsis phosphoproteome profiling reveals novel chloroplast kinase substrates and phosphorylation networks.</title>
        <authorList>
            <person name="Reiland S."/>
            <person name="Messerli G."/>
            <person name="Baerenfaller K."/>
            <person name="Gerrits B."/>
            <person name="Endler A."/>
            <person name="Grossmann J."/>
            <person name="Gruissem W."/>
            <person name="Baginsky S."/>
        </authorList>
    </citation>
    <scope>IDENTIFICATION BY MASS SPECTROMETRY [LARGE SCALE ANALYSIS]</scope>
</reference>
<reference key="8">
    <citation type="journal article" date="2011" name="RNA">
        <title>Chloroplast RNase J compensates for inefficient transcription termination by removal of antisense RNA.</title>
        <authorList>
            <person name="Sharwood R.E."/>
            <person name="Halpert M."/>
            <person name="Luro S."/>
            <person name="Schuster G."/>
            <person name="Stern D.B."/>
        </authorList>
    </citation>
    <scope>FUNCTION</scope>
    <scope>DISRUPTION PHENOTYPE</scope>
    <scope>SUBCELLULAR LOCATION</scope>
    <source>
        <strain>cv. Columbia</strain>
    </source>
</reference>
<reference key="9">
    <citation type="journal article" date="2015" name="J. Exp. Bot.">
        <title>Ribonuclease J is required for chloroplast and embryo development in Arabidopsis.</title>
        <authorList>
            <person name="Chen H."/>
            <person name="Zou W."/>
            <person name="Zhao J."/>
        </authorList>
    </citation>
    <scope>FUNCTION</scope>
    <scope>DISRUPTION PHENOTYPE</scope>
    <scope>TISSUE SPECIFICITY</scope>
    <scope>DEVELOPMENTAL STAGE</scope>
    <scope>INDUCTION BY LIGHT</scope>
    <source>
        <strain>cv. Col-3</strain>
        <strain>cv. Columbia</strain>
    </source>
</reference>
<proteinExistence type="evidence at protein level"/>
<keyword id="KW-0927">Auxin signaling pathway</keyword>
<keyword id="KW-0150">Chloroplast</keyword>
<keyword id="KW-0217">Developmental protein</keyword>
<keyword id="KW-0255">Endonuclease</keyword>
<keyword id="KW-0269">Exonuclease</keyword>
<keyword id="KW-0378">Hydrolase</keyword>
<keyword id="KW-0479">Metal-binding</keyword>
<keyword id="KW-0540">Nuclease</keyword>
<keyword id="KW-0934">Plastid</keyword>
<keyword id="KW-1185">Reference proteome</keyword>
<keyword id="KW-0694">RNA-binding</keyword>
<keyword id="KW-0698">rRNA processing</keyword>
<keyword id="KW-0809">Transit peptide</keyword>
<keyword id="KW-0862">Zinc</keyword>
<protein>
    <recommendedName>
        <fullName evidence="9">Ribonuclease J</fullName>
        <shortName evidence="9">RNase J</shortName>
        <ecNumber evidence="10">3.1.-.-</ecNumber>
    </recommendedName>
    <alternativeName>
        <fullName evidence="8">Protein EMBRYO DEFECTIVE 2746</fullName>
    </alternativeName>
</protein>
<sequence length="911" mass="100554">MMKPASLQGFSSHASSSIYSDVRRPATTPSKMAAFSALSLCPYTFTFRQSSRIKSTVSCSVTSAPASGTSSSSKTPRRRSGRLEGVGKSMEDSVKRKMEQFYEGTDGPPLRILPIGGLGEIGMNCMLVGNYDRYILIDAGIMFPDYDEPGIQKIMPDTGFIRRWKHKIEAVVITHGHEDHIGALPWVIPALDPNTPIFASSFTMELIKKRLKEHGIFVQSRLKTFSTRRRFMAGPFEIEPITVTHSIPDCSGLFLRCADGNILHTGDWKIDEAPLDGKVFDREALEELSKEGVTLMMSDSTNVLSPGRTISEKVVADALVRNVMAAKGRVITTQFASNIHRLGSIKAAADITGRKLVFVGMSLRTYLEAAWRDGKAPIDPSSLIKVEDIEAYAPKDLLIVTTGSQAEPRAALNLASYGSSHAFKLTKEDIILYSAKVIPGNESRVMKMMNRIADIGPNIIMGKNEMLHTSGHAYRGELEEVLKIVKPQHFLPIHGELLFLKEHELLGKSTGIRHTTVIKNGEMLGVSHLRNRRVLSNGFSSLGRENLQLMYSDGDKAFGTSSELCIDERLRISSDGIIVLSMEIMRPGVSENTLKGKIRITTRCMWLDKGRLLDALHKAAHAALSSCPVTCPLSHMERTVSEVLRKIVRKYSGKRPEVIAIATENPMAVRADEVSARLSGDPSVGSGVAALRKVVEGNDKRSRAKKAPSQEASPKEVDRTLEDDIIDSARLLAEEETAASTYTEEVDTPVGSSSEESDDFWKSFINPSSSPSPSETENMNKVADTEPKAEGKENSRDDDELADASDSETKSSPKRVRKNKWKPEEIKKVIRMRGELHSRFQVVKGRMALWEEISSNLSAEGINRSPGQCKSLWASLIQKYEESKADERSKTSWPHFEDMNNILSELGTPAS</sequence>
<accession>Q84W56</accession>
<accession>Q67YC1</accession>
<accession>Q9FMV9</accession>
<accession>Q9FMW0</accession>
<dbReference type="EC" id="3.1.-.-" evidence="10"/>
<dbReference type="EMBL" id="AB007649">
    <property type="protein sequence ID" value="BAB08807.1"/>
    <property type="status" value="ALT_SEQ"/>
    <property type="molecule type" value="Genomic_DNA"/>
</dbReference>
<dbReference type="EMBL" id="AB007649">
    <property type="protein sequence ID" value="BAB08808.1"/>
    <property type="status" value="ALT_SEQ"/>
    <property type="molecule type" value="Genomic_DNA"/>
</dbReference>
<dbReference type="EMBL" id="CP002688">
    <property type="protein sequence ID" value="AED97746.1"/>
    <property type="molecule type" value="Genomic_DNA"/>
</dbReference>
<dbReference type="EMBL" id="BT004210">
    <property type="protein sequence ID" value="AAO42228.1"/>
    <property type="molecule type" value="mRNA"/>
</dbReference>
<dbReference type="EMBL" id="AK176547">
    <property type="protein sequence ID" value="BAD44310.1"/>
    <property type="molecule type" value="mRNA"/>
</dbReference>
<dbReference type="EMBL" id="AK221272">
    <property type="protein sequence ID" value="BAD93952.1"/>
    <property type="molecule type" value="mRNA"/>
</dbReference>
<dbReference type="RefSeq" id="NP_201147.2">
    <property type="nucleotide sequence ID" value="NM_125737.4"/>
</dbReference>
<dbReference type="SMR" id="Q84W56"/>
<dbReference type="FunCoup" id="Q84W56">
    <property type="interactions" value="451"/>
</dbReference>
<dbReference type="IntAct" id="Q84W56">
    <property type="interactions" value="1"/>
</dbReference>
<dbReference type="MINT" id="Q84W56"/>
<dbReference type="STRING" id="3702.Q84W56"/>
<dbReference type="iPTMnet" id="Q84W56"/>
<dbReference type="PaxDb" id="3702-AT5G63420.1"/>
<dbReference type="ProteomicsDB" id="228013"/>
<dbReference type="EnsemblPlants" id="AT5G63420.1">
    <property type="protein sequence ID" value="AT5G63420.1"/>
    <property type="gene ID" value="AT5G63420"/>
</dbReference>
<dbReference type="GeneID" id="836461"/>
<dbReference type="Gramene" id="AT5G63420.1">
    <property type="protein sequence ID" value="AT5G63420.1"/>
    <property type="gene ID" value="AT5G63420"/>
</dbReference>
<dbReference type="KEGG" id="ath:AT5G63420"/>
<dbReference type="Araport" id="AT5G63420"/>
<dbReference type="TAIR" id="AT5G63420">
    <property type="gene designation" value="EMB2746"/>
</dbReference>
<dbReference type="eggNOG" id="KOG1137">
    <property type="taxonomic scope" value="Eukaryota"/>
</dbReference>
<dbReference type="eggNOG" id="KOG4282">
    <property type="taxonomic scope" value="Eukaryota"/>
</dbReference>
<dbReference type="HOGENOM" id="CLU_008727_0_2_1"/>
<dbReference type="InParanoid" id="Q84W56"/>
<dbReference type="OMA" id="INCPLPH"/>
<dbReference type="OrthoDB" id="17458at2759"/>
<dbReference type="PhylomeDB" id="Q84W56"/>
<dbReference type="PRO" id="PR:Q84W56"/>
<dbReference type="Proteomes" id="UP000006548">
    <property type="component" value="Chromosome 5"/>
</dbReference>
<dbReference type="ExpressionAtlas" id="Q84W56">
    <property type="expression patterns" value="baseline and differential"/>
</dbReference>
<dbReference type="GO" id="GO:0009507">
    <property type="term" value="C:chloroplast"/>
    <property type="evidence" value="ECO:0000314"/>
    <property type="project" value="UniProtKB"/>
</dbReference>
<dbReference type="GO" id="GO:0009536">
    <property type="term" value="C:plastid"/>
    <property type="evidence" value="ECO:0007005"/>
    <property type="project" value="TAIR"/>
</dbReference>
<dbReference type="GO" id="GO:0008409">
    <property type="term" value="F:5'-3' exonuclease activity"/>
    <property type="evidence" value="ECO:0000314"/>
    <property type="project" value="UniProtKB"/>
</dbReference>
<dbReference type="GO" id="GO:0004519">
    <property type="term" value="F:endonuclease activity"/>
    <property type="evidence" value="ECO:0000314"/>
    <property type="project" value="UniProtKB"/>
</dbReference>
<dbReference type="GO" id="GO:0046872">
    <property type="term" value="F:metal ion binding"/>
    <property type="evidence" value="ECO:0007669"/>
    <property type="project" value="UniProtKB-KW"/>
</dbReference>
<dbReference type="GO" id="GO:0003729">
    <property type="term" value="F:mRNA binding"/>
    <property type="evidence" value="ECO:0000314"/>
    <property type="project" value="TAIR"/>
</dbReference>
<dbReference type="GO" id="GO:0060918">
    <property type="term" value="P:auxin transport"/>
    <property type="evidence" value="ECO:0000270"/>
    <property type="project" value="TAIR"/>
</dbReference>
<dbReference type="GO" id="GO:0009734">
    <property type="term" value="P:auxin-activated signaling pathway"/>
    <property type="evidence" value="ECO:0007669"/>
    <property type="project" value="UniProtKB-KW"/>
</dbReference>
<dbReference type="GO" id="GO:0009658">
    <property type="term" value="P:chloroplast organization"/>
    <property type="evidence" value="ECO:0000315"/>
    <property type="project" value="TAIR"/>
</dbReference>
<dbReference type="GO" id="GO:0009793">
    <property type="term" value="P:embryo development ending in seed dormancy"/>
    <property type="evidence" value="ECO:0000315"/>
    <property type="project" value="TAIR"/>
</dbReference>
<dbReference type="GO" id="GO:0009942">
    <property type="term" value="P:longitudinal axis specification"/>
    <property type="evidence" value="ECO:0000315"/>
    <property type="project" value="TAIR"/>
</dbReference>
<dbReference type="GO" id="GO:0009416">
    <property type="term" value="P:response to light stimulus"/>
    <property type="evidence" value="ECO:0000270"/>
    <property type="project" value="UniProtKB"/>
</dbReference>
<dbReference type="GO" id="GO:0006364">
    <property type="term" value="P:rRNA processing"/>
    <property type="evidence" value="ECO:0007669"/>
    <property type="project" value="UniProtKB-KW"/>
</dbReference>
<dbReference type="CDD" id="cd12203">
    <property type="entry name" value="GT1"/>
    <property type="match status" value="1"/>
</dbReference>
<dbReference type="CDD" id="cd07714">
    <property type="entry name" value="RNaseJ_MBL-fold"/>
    <property type="match status" value="1"/>
</dbReference>
<dbReference type="Gene3D" id="1.10.10.60">
    <property type="entry name" value="Homeodomain-like"/>
    <property type="match status" value="1"/>
</dbReference>
<dbReference type="Gene3D" id="3.40.50.10710">
    <property type="entry name" value="Metallo-hydrolase/oxidoreductase"/>
    <property type="match status" value="1"/>
</dbReference>
<dbReference type="Gene3D" id="3.60.15.10">
    <property type="entry name" value="Ribonuclease Z/Hydroxyacylglutathione hydrolase-like"/>
    <property type="match status" value="1"/>
</dbReference>
<dbReference type="InterPro" id="IPR001279">
    <property type="entry name" value="Metallo-B-lactamas"/>
</dbReference>
<dbReference type="InterPro" id="IPR044822">
    <property type="entry name" value="Myb_DNA-bind_4"/>
</dbReference>
<dbReference type="InterPro" id="IPR036866">
    <property type="entry name" value="RibonucZ/Hydroxyglut_hydro"/>
</dbReference>
<dbReference type="InterPro" id="IPR011108">
    <property type="entry name" value="RMMBL"/>
</dbReference>
<dbReference type="InterPro" id="IPR042173">
    <property type="entry name" value="RNase_J_2"/>
</dbReference>
<dbReference type="InterPro" id="IPR055132">
    <property type="entry name" value="RNase_J_b_CASP"/>
</dbReference>
<dbReference type="InterPro" id="IPR001005">
    <property type="entry name" value="SANT/Myb"/>
</dbReference>
<dbReference type="PANTHER" id="PTHR43694">
    <property type="entry name" value="RIBONUCLEASE J"/>
    <property type="match status" value="1"/>
</dbReference>
<dbReference type="PANTHER" id="PTHR43694:SF1">
    <property type="entry name" value="RIBONUCLEASE J"/>
    <property type="match status" value="1"/>
</dbReference>
<dbReference type="Pfam" id="PF12706">
    <property type="entry name" value="Lactamase_B_2"/>
    <property type="match status" value="1"/>
</dbReference>
<dbReference type="Pfam" id="PF13837">
    <property type="entry name" value="Myb_DNA-bind_4"/>
    <property type="match status" value="1"/>
</dbReference>
<dbReference type="Pfam" id="PF07521">
    <property type="entry name" value="RMMBL"/>
    <property type="match status" value="1"/>
</dbReference>
<dbReference type="Pfam" id="PF22505">
    <property type="entry name" value="RNase_J_b_CASP"/>
    <property type="match status" value="1"/>
</dbReference>
<dbReference type="SMART" id="SM00849">
    <property type="entry name" value="Lactamase_B"/>
    <property type="match status" value="1"/>
</dbReference>
<dbReference type="SUPFAM" id="SSF56281">
    <property type="entry name" value="Metallo-hydrolase/oxidoreductase"/>
    <property type="match status" value="1"/>
</dbReference>
<dbReference type="PROSITE" id="PS50090">
    <property type="entry name" value="MYB_LIKE"/>
    <property type="match status" value="1"/>
</dbReference>
<feature type="transit peptide" description="Chloroplast" evidence="2">
    <location>
        <begin position="1"/>
        <end position="70"/>
    </location>
</feature>
<feature type="chain" id="PRO_0000444599" description="Ribonuclease J">
    <location>
        <begin position="71"/>
        <end position="911"/>
    </location>
</feature>
<feature type="domain" description="Myb-like" evidence="3">
    <location>
        <begin position="813"/>
        <end position="877"/>
    </location>
</feature>
<feature type="region of interest" description="Disordered" evidence="4">
    <location>
        <begin position="58"/>
        <end position="90"/>
    </location>
</feature>
<feature type="region of interest" description="Disordered" evidence="4">
    <location>
        <begin position="695"/>
        <end position="723"/>
    </location>
</feature>
<feature type="region of interest" description="Disordered" evidence="4">
    <location>
        <begin position="735"/>
        <end position="824"/>
    </location>
</feature>
<feature type="compositionally biased region" description="Low complexity" evidence="4">
    <location>
        <begin position="63"/>
        <end position="74"/>
    </location>
</feature>
<feature type="compositionally biased region" description="Basic and acidic residues" evidence="4">
    <location>
        <begin position="713"/>
        <end position="722"/>
    </location>
</feature>
<feature type="compositionally biased region" description="Basic and acidic residues" evidence="4">
    <location>
        <begin position="783"/>
        <end position="795"/>
    </location>
</feature>
<feature type="compositionally biased region" description="Acidic residues" evidence="4">
    <location>
        <begin position="796"/>
        <end position="806"/>
    </location>
</feature>
<feature type="binding site" evidence="1">
    <location>
        <position position="175"/>
    </location>
    <ligand>
        <name>Zn(2+)</name>
        <dbReference type="ChEBI" id="CHEBI:29105"/>
        <label>1</label>
        <note>catalytic</note>
    </ligand>
</feature>
<feature type="binding site" evidence="1">
    <location>
        <position position="177"/>
    </location>
    <ligand>
        <name>Zn(2+)</name>
        <dbReference type="ChEBI" id="CHEBI:29105"/>
        <label>1</label>
        <note>catalytic</note>
    </ligand>
</feature>
<feature type="binding site" evidence="1">
    <location>
        <position position="179"/>
    </location>
    <ligand>
        <name>Zn(2+)</name>
        <dbReference type="ChEBI" id="CHEBI:29105"/>
        <label>2</label>
        <note>catalytic</note>
    </ligand>
</feature>
<feature type="binding site" evidence="1">
    <location>
        <position position="180"/>
    </location>
    <ligand>
        <name>Zn(2+)</name>
        <dbReference type="ChEBI" id="CHEBI:29105"/>
        <label>2</label>
        <note>catalytic</note>
    </ligand>
</feature>
<feature type="binding site" evidence="1">
    <location>
        <position position="245"/>
    </location>
    <ligand>
        <name>Zn(2+)</name>
        <dbReference type="ChEBI" id="CHEBI:29105"/>
        <label>1</label>
        <note>catalytic</note>
    </ligand>
</feature>
<feature type="binding site" evidence="1">
    <location>
        <position position="267"/>
    </location>
    <ligand>
        <name>Zn(2+)</name>
        <dbReference type="ChEBI" id="CHEBI:29105"/>
        <label>1</label>
        <note>catalytic</note>
    </ligand>
</feature>
<feature type="binding site" evidence="1">
    <location>
        <position position="267"/>
    </location>
    <ligand>
        <name>Zn(2+)</name>
        <dbReference type="ChEBI" id="CHEBI:29105"/>
        <label>2</label>
        <note>catalytic</note>
    </ligand>
</feature>
<feature type="binding site" evidence="1">
    <location>
        <begin position="336"/>
        <end position="338"/>
    </location>
    <ligand>
        <name>substrate</name>
    </ligand>
</feature>
<feature type="binding site" evidence="1">
    <location>
        <begin position="468"/>
        <end position="472"/>
    </location>
    <ligand>
        <name>substrate</name>
    </ligand>
</feature>
<feature type="binding site" evidence="1">
    <location>
        <position position="494"/>
    </location>
    <ligand>
        <name>Zn(2+)</name>
        <dbReference type="ChEBI" id="CHEBI:29105"/>
        <label>2</label>
        <note>catalytic</note>
    </ligand>
</feature>
<feature type="sequence conflict" description="In Ref. 4; BAD44310." evidence="10" ref="4">
    <original>G</original>
    <variation>E</variation>
    <location>
        <position position="328"/>
    </location>
</feature>
<feature type="sequence conflict" description="In Ref. 4; BAD44310." evidence="10" ref="4">
    <original>N</original>
    <variation>D</variation>
    <location>
        <position position="665"/>
    </location>
</feature>
<feature type="sequence conflict" description="In Ref. 4; BAD44310." evidence="10" ref="4">
    <original>A</original>
    <variation>T</variation>
    <location>
        <position position="804"/>
    </location>
</feature>
<name>RNJ_ARATH</name>